<gene>
    <name evidence="4" type="primary">MSANTD7</name>
</gene>
<evidence type="ECO:0000255" key="1">
    <source>
        <dbReference type="PROSITE-ProRule" id="PRU00133"/>
    </source>
</evidence>
<evidence type="ECO:0000256" key="2">
    <source>
        <dbReference type="SAM" id="MobiDB-lite"/>
    </source>
</evidence>
<evidence type="ECO:0000305" key="3"/>
<evidence type="ECO:0000312" key="4">
    <source>
        <dbReference type="HGNC" id="HGNC:56248"/>
    </source>
</evidence>
<accession>A0A1W2PQ72</accession>
<name>MSD7_HUMAN</name>
<reference key="1">
    <citation type="journal article" date="2004" name="Nature">
        <title>The DNA sequence and comparative analysis of human chromosome 10.</title>
        <authorList>
            <person name="Deloukas P."/>
            <person name="Earthrowl M.E."/>
            <person name="Grafham D.V."/>
            <person name="Rubenfield M."/>
            <person name="French L."/>
            <person name="Steward C.A."/>
            <person name="Sims S.K."/>
            <person name="Jones M.C."/>
            <person name="Searle S."/>
            <person name="Scott C."/>
            <person name="Howe K."/>
            <person name="Hunt S.E."/>
            <person name="Andrews T.D."/>
            <person name="Gilbert J.G.R."/>
            <person name="Swarbreck D."/>
            <person name="Ashurst J.L."/>
            <person name="Taylor A."/>
            <person name="Battles J."/>
            <person name="Bird C.P."/>
            <person name="Ainscough R."/>
            <person name="Almeida J.P."/>
            <person name="Ashwell R.I.S."/>
            <person name="Ambrose K.D."/>
            <person name="Babbage A.K."/>
            <person name="Bagguley C.L."/>
            <person name="Bailey J."/>
            <person name="Banerjee R."/>
            <person name="Bates K."/>
            <person name="Beasley H."/>
            <person name="Bray-Allen S."/>
            <person name="Brown A.J."/>
            <person name="Brown J.Y."/>
            <person name="Burford D.C."/>
            <person name="Burrill W."/>
            <person name="Burton J."/>
            <person name="Cahill P."/>
            <person name="Camire D."/>
            <person name="Carter N.P."/>
            <person name="Chapman J.C."/>
            <person name="Clark S.Y."/>
            <person name="Clarke G."/>
            <person name="Clee C.M."/>
            <person name="Clegg S."/>
            <person name="Corby N."/>
            <person name="Coulson A."/>
            <person name="Dhami P."/>
            <person name="Dutta I."/>
            <person name="Dunn M."/>
            <person name="Faulkner L."/>
            <person name="Frankish A."/>
            <person name="Frankland J.A."/>
            <person name="Garner P."/>
            <person name="Garnett J."/>
            <person name="Gribble S."/>
            <person name="Griffiths C."/>
            <person name="Grocock R."/>
            <person name="Gustafson E."/>
            <person name="Hammond S."/>
            <person name="Harley J.L."/>
            <person name="Hart E."/>
            <person name="Heath P.D."/>
            <person name="Ho T.P."/>
            <person name="Hopkins B."/>
            <person name="Horne J."/>
            <person name="Howden P.J."/>
            <person name="Huckle E."/>
            <person name="Hynds C."/>
            <person name="Johnson C."/>
            <person name="Johnson D."/>
            <person name="Kana A."/>
            <person name="Kay M."/>
            <person name="Kimberley A.M."/>
            <person name="Kershaw J.K."/>
            <person name="Kokkinaki M."/>
            <person name="Laird G.K."/>
            <person name="Lawlor S."/>
            <person name="Lee H.M."/>
            <person name="Leongamornlert D.A."/>
            <person name="Laird G."/>
            <person name="Lloyd C."/>
            <person name="Lloyd D.M."/>
            <person name="Loveland J."/>
            <person name="Lovell J."/>
            <person name="McLaren S."/>
            <person name="McLay K.E."/>
            <person name="McMurray A."/>
            <person name="Mashreghi-Mohammadi M."/>
            <person name="Matthews L."/>
            <person name="Milne S."/>
            <person name="Nickerson T."/>
            <person name="Nguyen M."/>
            <person name="Overton-Larty E."/>
            <person name="Palmer S.A."/>
            <person name="Pearce A.V."/>
            <person name="Peck A.I."/>
            <person name="Pelan S."/>
            <person name="Phillimore B."/>
            <person name="Porter K."/>
            <person name="Rice C.M."/>
            <person name="Rogosin A."/>
            <person name="Ross M.T."/>
            <person name="Sarafidou T."/>
            <person name="Sehra H.K."/>
            <person name="Shownkeen R."/>
            <person name="Skuce C.D."/>
            <person name="Smith M."/>
            <person name="Standring L."/>
            <person name="Sycamore N."/>
            <person name="Tester J."/>
            <person name="Thorpe A."/>
            <person name="Torcasso W."/>
            <person name="Tracey A."/>
            <person name="Tromans A."/>
            <person name="Tsolas J."/>
            <person name="Wall M."/>
            <person name="Walsh J."/>
            <person name="Wang H."/>
            <person name="Weinstock K."/>
            <person name="West A.P."/>
            <person name="Willey D.L."/>
            <person name="Whitehead S.L."/>
            <person name="Wilming L."/>
            <person name="Wray P.W."/>
            <person name="Young L."/>
            <person name="Chen Y."/>
            <person name="Lovering R.C."/>
            <person name="Moschonas N.K."/>
            <person name="Siebert R."/>
            <person name="Fechtel K."/>
            <person name="Bentley D."/>
            <person name="Durbin R.M."/>
            <person name="Hubbard T."/>
            <person name="Doucette-Stamm L."/>
            <person name="Beck S."/>
            <person name="Smith D.R."/>
            <person name="Rogers J."/>
        </authorList>
    </citation>
    <scope>NUCLEOTIDE SEQUENCE [LARGE SCALE GENOMIC DNA]</scope>
</reference>
<sequence length="361" mass="39760">MASANSSAGIRWSRQETRTLLSILGEAEYIQRLQTVHHNADVYQAVSKRMQQEGFRRTERQCRSKFKVLKALYLKAYVAHATSMGEPPHCPFYDTLDQLLRNQIVTDPDNLMEDAAWAKHCDQNLVASDAPGEEGTGILKSKRTQAADHQPILKTVKASDEDCQLRISDRIRETSDLEDSWDESSGAGCSQGTPSYSSSHSLFRGAVAPCQSSPMARLGVSGEPSPCTSTNRSTPGVASTPQTPVSSSRAGFVSGGDRPLTSEPPPRWARRRRRSVARTIAAELAENRRLARELSKREEEKLDRLIAIGEEASAQQDTANELRRDAVIAVRRLATAVEEATGAFQLGLEKLLQRLISNTKS</sequence>
<feature type="chain" id="PRO_0000456728" description="Myb/SANT-like DNA-binding domain-containing protein 7">
    <location>
        <begin position="1"/>
        <end position="361"/>
    </location>
</feature>
<feature type="domain" description="Myb-like" evidence="1">
    <location>
        <begin position="11"/>
        <end position="70"/>
    </location>
</feature>
<feature type="region of interest" description="Disordered" evidence="2">
    <location>
        <begin position="174"/>
        <end position="198"/>
    </location>
</feature>
<feature type="region of interest" description="Disordered" evidence="2">
    <location>
        <begin position="217"/>
        <end position="272"/>
    </location>
</feature>
<feature type="compositionally biased region" description="Polar residues" evidence="2">
    <location>
        <begin position="187"/>
        <end position="198"/>
    </location>
</feature>
<feature type="compositionally biased region" description="Polar residues" evidence="2">
    <location>
        <begin position="226"/>
        <end position="249"/>
    </location>
</feature>
<dbReference type="EMBL" id="AC069544">
    <property type="status" value="NOT_ANNOTATED_CDS"/>
    <property type="molecule type" value="Genomic_DNA"/>
</dbReference>
<dbReference type="RefSeq" id="NP_001365714.1">
    <property type="nucleotide sequence ID" value="NM_001378785.1"/>
</dbReference>
<dbReference type="SMR" id="A0A1W2PQ72"/>
<dbReference type="GlyGen" id="A0A1W2PQ72">
    <property type="glycosylation" value="1 site"/>
</dbReference>
<dbReference type="BioMuta" id="ENSG00000284024"/>
<dbReference type="MassIVE" id="A0A1W2PQ72"/>
<dbReference type="PeptideAtlas" id="A0A1W2PQ72"/>
<dbReference type="Ensembl" id="ENST00000640019.3">
    <property type="protein sequence ID" value="ENSP00000491568.1"/>
    <property type="gene ID" value="ENSG00000284024.4"/>
</dbReference>
<dbReference type="GeneID" id="100421372"/>
<dbReference type="MANE-Select" id="ENST00000640019.3">
    <property type="protein sequence ID" value="ENSP00000491568.1"/>
    <property type="RefSeq nucleotide sequence ID" value="NM_001378785.1"/>
    <property type="RefSeq protein sequence ID" value="NP_001365714.1"/>
</dbReference>
<dbReference type="AGR" id="HGNC:56248"/>
<dbReference type="GeneCards" id="MSANTD7"/>
<dbReference type="HGNC" id="HGNC:56248">
    <property type="gene designation" value="MSANTD7"/>
</dbReference>
<dbReference type="VEuPathDB" id="HostDB:ENSG00000284024"/>
<dbReference type="GeneTree" id="ENSGT00940000163231"/>
<dbReference type="InParanoid" id="A0A1W2PQ72"/>
<dbReference type="OMA" id="SEPPTRW"/>
<dbReference type="OrthoDB" id="691673at2759"/>
<dbReference type="PAN-GO" id="A0A1W2PQ72">
    <property type="GO annotations" value="0 GO annotations based on evolutionary models"/>
</dbReference>
<dbReference type="ChiTaRS" id="HSPA14">
    <property type="organism name" value="human"/>
</dbReference>
<dbReference type="PRO" id="PR:A0A1W2PQ72"/>
<dbReference type="Proteomes" id="UP000005640">
    <property type="component" value="Chromosome 10"/>
</dbReference>
<dbReference type="RNAct" id="A0A1W2PQ72">
    <property type="molecule type" value="protein"/>
</dbReference>
<dbReference type="Bgee" id="ENSG00000284024">
    <property type="expression patterns" value="Expressed in epithelial cell of pancreas and 161 other cell types or tissues"/>
</dbReference>
<dbReference type="ExpressionAtlas" id="A0A1W2PQ72">
    <property type="expression patterns" value="baseline and differential"/>
</dbReference>
<dbReference type="FunFam" id="1.10.10.60:FF:000032">
    <property type="entry name" value="Zinc finger and SCAN domain-containing 20"/>
    <property type="match status" value="1"/>
</dbReference>
<dbReference type="Gene3D" id="1.10.10.60">
    <property type="entry name" value="Homeodomain-like"/>
    <property type="match status" value="1"/>
</dbReference>
<dbReference type="InterPro" id="IPR044822">
    <property type="entry name" value="Myb_DNA-bind_4"/>
</dbReference>
<dbReference type="PANTHER" id="PTHR47595">
    <property type="entry name" value="HEAT SHOCK 70 KDA PROTEIN 14"/>
    <property type="match status" value="1"/>
</dbReference>
<dbReference type="PANTHER" id="PTHR47595:SF2">
    <property type="entry name" value="MYB_SANT-LIKE DNA-BINDING DOMAIN-CONTAINING PROTEIN 7"/>
    <property type="match status" value="1"/>
</dbReference>
<dbReference type="Pfam" id="PF13837">
    <property type="entry name" value="Myb_DNA-bind_4"/>
    <property type="match status" value="1"/>
</dbReference>
<organism>
    <name type="scientific">Homo sapiens</name>
    <name type="common">Human</name>
    <dbReference type="NCBI Taxonomy" id="9606"/>
    <lineage>
        <taxon>Eukaryota</taxon>
        <taxon>Metazoa</taxon>
        <taxon>Chordata</taxon>
        <taxon>Craniata</taxon>
        <taxon>Vertebrata</taxon>
        <taxon>Euteleostomi</taxon>
        <taxon>Mammalia</taxon>
        <taxon>Eutheria</taxon>
        <taxon>Euarchontoglires</taxon>
        <taxon>Primates</taxon>
        <taxon>Haplorrhini</taxon>
        <taxon>Catarrhini</taxon>
        <taxon>Hominidae</taxon>
        <taxon>Homo</taxon>
    </lineage>
</organism>
<keyword id="KW-1267">Proteomics identification</keyword>
<keyword id="KW-1185">Reference proteome</keyword>
<protein>
    <recommendedName>
        <fullName evidence="3">Myb/SANT-like DNA-binding domain-containing protein 7</fullName>
    </recommendedName>
</protein>
<proteinExistence type="evidence at protein level"/>